<proteinExistence type="evidence at protein level"/>
<accession>P9WJF5</accession>
<accession>F2GLB5</accession>
<accession>L0TCC2</accession>
<accession>P71633</accession>
<accession>Q7D6I5</accession>
<sequence length="375" mass="42340">MNTYLKPFELTLRCLGPVFIGSGEKRTSKEYHVEGDRVYFPDMELLYADIPAHKRKSFEAFVMNTDGAQATAPLKEWVEPNAVKLDPAKHRGYEVKIGSIEPRRASRGRGGRMTRKKLTLNEIHAFIKDPLGRPYVPGSTVKGMLRSIYLQSLVHKRTAQPVRVPGHQTREHRQYGERFERKELRKSGRPNTRPQDAVNDLFQAIRVTDSPALRTSDLLICQKMDMNVHGKPDGLPLFRECLAPGTSISHRVVVDTSPTARGGWREGERFLETLAETAASVNQARYAEYRAMYPGVNAIVGPIVYLGGGAGYRSKTFVTDQDDMAKVLDAQFGKVVKHVDKTRELRVSPLVLKRTKIDNICYEMGQCELSIRRAE</sequence>
<gene>
    <name type="primary">csm5</name>
    <name type="ordered locus">Rv2819c</name>
</gene>
<dbReference type="EMBL" id="AL123456">
    <property type="protein sequence ID" value="CCP45619.1"/>
    <property type="molecule type" value="Genomic_DNA"/>
</dbReference>
<dbReference type="PIR" id="F70691">
    <property type="entry name" value="F70691"/>
</dbReference>
<dbReference type="RefSeq" id="NP_217335.1">
    <property type="nucleotide sequence ID" value="NC_000962.3"/>
</dbReference>
<dbReference type="RefSeq" id="WP_003414285.1">
    <property type="nucleotide sequence ID" value="NZ_NVQJ01000006.1"/>
</dbReference>
<dbReference type="PDB" id="8X5D">
    <property type="method" value="EM"/>
    <property type="resolution" value="3.10 A"/>
    <property type="chains" value="N=1-375"/>
</dbReference>
<dbReference type="PDBsum" id="8X5D"/>
<dbReference type="SMR" id="P9WJF5"/>
<dbReference type="STRING" id="83332.Rv2819c"/>
<dbReference type="PaxDb" id="83332-Rv2819c"/>
<dbReference type="DNASU" id="888514"/>
<dbReference type="GeneID" id="888514"/>
<dbReference type="KEGG" id="mtu:Rv2819c"/>
<dbReference type="KEGG" id="mtv:RVBD_2819c"/>
<dbReference type="TubercuList" id="Rv2819c"/>
<dbReference type="eggNOG" id="COG1332">
    <property type="taxonomic scope" value="Bacteria"/>
</dbReference>
<dbReference type="InParanoid" id="P9WJF5"/>
<dbReference type="OrthoDB" id="24360at2"/>
<dbReference type="PHI-base" id="PHI:12081"/>
<dbReference type="Proteomes" id="UP000001584">
    <property type="component" value="Chromosome"/>
</dbReference>
<dbReference type="GO" id="GO:0005829">
    <property type="term" value="C:cytosol"/>
    <property type="evidence" value="ECO:0007005"/>
    <property type="project" value="MTBBASE"/>
</dbReference>
<dbReference type="GO" id="GO:0005886">
    <property type="term" value="C:plasma membrane"/>
    <property type="evidence" value="ECO:0007005"/>
    <property type="project" value="MTBBASE"/>
</dbReference>
<dbReference type="GO" id="GO:0003723">
    <property type="term" value="F:RNA binding"/>
    <property type="evidence" value="ECO:0007669"/>
    <property type="project" value="UniProtKB-KW"/>
</dbReference>
<dbReference type="GO" id="GO:0051607">
    <property type="term" value="P:defense response to virus"/>
    <property type="evidence" value="ECO:0007669"/>
    <property type="project" value="UniProtKB-KW"/>
</dbReference>
<dbReference type="CDD" id="cd09662">
    <property type="entry name" value="Csm5_III-A"/>
    <property type="match status" value="1"/>
</dbReference>
<dbReference type="InterPro" id="IPR010173">
    <property type="entry name" value="CRISPR-assoc_Csm5"/>
</dbReference>
<dbReference type="InterPro" id="IPR005537">
    <property type="entry name" value="RAMP_III_fam"/>
</dbReference>
<dbReference type="NCBIfam" id="TIGR01899">
    <property type="entry name" value="cas_TM1807_csm5"/>
    <property type="match status" value="1"/>
</dbReference>
<dbReference type="PANTHER" id="PTHR38007">
    <property type="entry name" value="CRISPR SYSTEM CMS PROTEIN CSM5"/>
    <property type="match status" value="1"/>
</dbReference>
<dbReference type="PANTHER" id="PTHR38007:SF1">
    <property type="entry name" value="CRISPR SYSTEM CMS PROTEIN CSM5"/>
    <property type="match status" value="1"/>
</dbReference>
<dbReference type="Pfam" id="PF03787">
    <property type="entry name" value="RAMPs"/>
    <property type="match status" value="1"/>
</dbReference>
<reference key="1">
    <citation type="journal article" date="1998" name="Nature">
        <title>Deciphering the biology of Mycobacterium tuberculosis from the complete genome sequence.</title>
        <authorList>
            <person name="Cole S.T."/>
            <person name="Brosch R."/>
            <person name="Parkhill J."/>
            <person name="Garnier T."/>
            <person name="Churcher C.M."/>
            <person name="Harris D.E."/>
            <person name="Gordon S.V."/>
            <person name="Eiglmeier K."/>
            <person name="Gas S."/>
            <person name="Barry C.E. III"/>
            <person name="Tekaia F."/>
            <person name="Badcock K."/>
            <person name="Basham D."/>
            <person name="Brown D."/>
            <person name="Chillingworth T."/>
            <person name="Connor R."/>
            <person name="Davies R.M."/>
            <person name="Devlin K."/>
            <person name="Feltwell T."/>
            <person name="Gentles S."/>
            <person name="Hamlin N."/>
            <person name="Holroyd S."/>
            <person name="Hornsby T."/>
            <person name="Jagels K."/>
            <person name="Krogh A."/>
            <person name="McLean J."/>
            <person name="Moule S."/>
            <person name="Murphy L.D."/>
            <person name="Oliver S."/>
            <person name="Osborne J."/>
            <person name="Quail M.A."/>
            <person name="Rajandream M.A."/>
            <person name="Rogers J."/>
            <person name="Rutter S."/>
            <person name="Seeger K."/>
            <person name="Skelton S."/>
            <person name="Squares S."/>
            <person name="Squares R."/>
            <person name="Sulston J.E."/>
            <person name="Taylor K."/>
            <person name="Whitehead S."/>
            <person name="Barrell B.G."/>
        </authorList>
    </citation>
    <scope>NUCLEOTIDE SEQUENCE [LARGE SCALE GENOMIC DNA]</scope>
    <source>
        <strain>ATCC 25618 / H37Rv</strain>
    </source>
</reference>
<reference key="2">
    <citation type="journal article" date="2019" name="FASEB J.">
        <title>Mycobacterium tuberculosis type III-A CRISPR/Cas system crRNA and its maturation have atypical features.</title>
        <authorList>
            <person name="Wei W."/>
            <person name="Zhang S."/>
            <person name="Fleming J."/>
            <person name="Chen Y."/>
            <person name="Li Z."/>
            <person name="Fan S."/>
            <person name="Liu Y."/>
            <person name="Wang W."/>
            <person name="Wang T."/>
            <person name="Liu Y."/>
            <person name="Ren B."/>
            <person name="Wang M."/>
            <person name="Jiao J."/>
            <person name="Chen Y."/>
            <person name="Zhou Y."/>
            <person name="Zhou Y."/>
            <person name="Gu S."/>
            <person name="Zhang X."/>
            <person name="Wan L."/>
            <person name="Chen T."/>
            <person name="Zhou L."/>
            <person name="Chen Y."/>
            <person name="Zhang X.E."/>
            <person name="Li C."/>
            <person name="Zhang H."/>
            <person name="Bi L."/>
        </authorList>
    </citation>
    <scope>FUNCTION IN PLASMID RESISTANCE</scope>
    <scope>SUBUNIT</scope>
    <scope>DISRUPTION PHENOTYPE</scope>
    <source>
        <strain>H37Rv</strain>
    </source>
</reference>
<comment type="function">
    <text evidence="3 5">CRISPR (clustered regularly interspaced short palindromic repeat) is an adaptive immune system that provides protection against mobile genetic elements (viruses, transposable elements and conjugative plasmids). CRISPR clusters contain spacers, sequences complementary to antecedent mobile elements, and target invading nucleic acids. CRISPR clusters are transcribed and processed into CRISPR RNA (crRNA). The type III-A Csm effector complex binds crRNA and acts as a crRNA-guided RNase, DNase and cyclic oligoadenylate synthase; binding of target RNA cognate to the crRNA is required for all activities (Probable). This CRISPR-Cas system protects bacteria against transformation with plasmids containing DNA homologous to its spacer regions (PubMed:29979631).</text>
</comment>
<comment type="function">
    <text evidence="1">This subunit might be involved in maturation of a crRNA intermediate to its mature form.</text>
</comment>
<comment type="subunit">
    <text evidence="3">Part of the Csm effector complex that includes Cas10, Csm2, Csm3, Csm4 and Csm5.</text>
</comment>
<comment type="disruption phenotype">
    <text evidence="3">Deletion of the entire CRISPR-Cas locus (cas6 to cas2, Rv2824c to Rv2816c) decreases resistance to plasmids encoding spacer elements about 6-fold.</text>
</comment>
<comment type="miscellaneous">
    <text evidence="5">Encoded in a type III-A CRISPR locus.</text>
</comment>
<comment type="similarity">
    <text evidence="4">Belongs to the CRISPR-associated Csm5 family.</text>
</comment>
<name>CSM5_MYCTU</name>
<keyword id="KW-0002">3D-structure</keyword>
<keyword id="KW-0051">Antiviral defense</keyword>
<keyword id="KW-1185">Reference proteome</keyword>
<keyword id="KW-0694">RNA-binding</keyword>
<feature type="chain" id="PRO_0000418228" description="CRISPR system Cms protein Csm5">
    <location>
        <begin position="1"/>
        <end position="375"/>
    </location>
</feature>
<feature type="region of interest" description="Disordered" evidence="2">
    <location>
        <begin position="167"/>
        <end position="195"/>
    </location>
</feature>
<feature type="compositionally biased region" description="Basic and acidic residues" evidence="2">
    <location>
        <begin position="168"/>
        <end position="186"/>
    </location>
</feature>
<feature type="strand" evidence="6">
    <location>
        <begin position="3"/>
        <end position="7"/>
    </location>
</feature>
<feature type="strand" evidence="6">
    <location>
        <begin position="9"/>
        <end position="16"/>
    </location>
</feature>
<feature type="strand" evidence="6">
    <location>
        <begin position="21"/>
        <end position="27"/>
    </location>
</feature>
<feature type="turn" evidence="6">
    <location>
        <begin position="28"/>
        <end position="30"/>
    </location>
</feature>
<feature type="strand" evidence="6">
    <location>
        <begin position="32"/>
        <end position="34"/>
    </location>
</feature>
<feature type="strand" evidence="6">
    <location>
        <begin position="37"/>
        <end position="40"/>
    </location>
</feature>
<feature type="helix" evidence="6">
    <location>
        <begin position="45"/>
        <end position="48"/>
    </location>
</feature>
<feature type="helix" evidence="6">
    <location>
        <begin position="55"/>
        <end position="62"/>
    </location>
</feature>
<feature type="strand" evidence="6">
    <location>
        <begin position="65"/>
        <end position="68"/>
    </location>
</feature>
<feature type="helix" evidence="6">
    <location>
        <begin position="74"/>
        <end position="78"/>
    </location>
</feature>
<feature type="turn" evidence="6">
    <location>
        <begin position="79"/>
        <end position="82"/>
    </location>
</feature>
<feature type="turn" evidence="6">
    <location>
        <begin position="87"/>
        <end position="89"/>
    </location>
</feature>
<feature type="strand" evidence="6">
    <location>
        <begin position="93"/>
        <end position="95"/>
    </location>
</feature>
<feature type="strand" evidence="6">
    <location>
        <begin position="122"/>
        <end position="126"/>
    </location>
</feature>
<feature type="strand" evidence="6">
    <location>
        <begin position="130"/>
        <end position="132"/>
    </location>
</feature>
<feature type="helix" evidence="6">
    <location>
        <begin position="138"/>
        <end position="155"/>
    </location>
</feature>
<feature type="helix" evidence="6">
    <location>
        <begin position="169"/>
        <end position="183"/>
    </location>
</feature>
<feature type="strand" evidence="6">
    <location>
        <begin position="190"/>
        <end position="192"/>
    </location>
</feature>
<feature type="helix" evidence="6">
    <location>
        <begin position="197"/>
        <end position="199"/>
    </location>
</feature>
<feature type="helix" evidence="6">
    <location>
        <begin position="201"/>
        <end position="203"/>
    </location>
</feature>
<feature type="strand" evidence="6">
    <location>
        <begin position="204"/>
        <end position="207"/>
    </location>
</feature>
<feature type="strand" evidence="6">
    <location>
        <begin position="224"/>
        <end position="226"/>
    </location>
</feature>
<feature type="strand" evidence="6">
    <location>
        <begin position="247"/>
        <end position="250"/>
    </location>
</feature>
<feature type="strand" evidence="6">
    <location>
        <begin position="252"/>
        <end position="255"/>
    </location>
</feature>
<feature type="helix" evidence="6">
    <location>
        <begin position="265"/>
        <end position="272"/>
    </location>
</feature>
<feature type="helix" evidence="6">
    <location>
        <begin position="274"/>
        <end position="285"/>
    </location>
</feature>
<feature type="helix" evidence="6">
    <location>
        <begin position="287"/>
        <end position="290"/>
    </location>
</feature>
<feature type="strand" evidence="6">
    <location>
        <begin position="303"/>
        <end position="305"/>
    </location>
</feature>
<feature type="strand" evidence="6">
    <location>
        <begin position="307"/>
        <end position="310"/>
    </location>
</feature>
<feature type="helix" evidence="6">
    <location>
        <begin position="313"/>
        <end position="315"/>
    </location>
</feature>
<feature type="helix" evidence="6">
    <location>
        <begin position="323"/>
        <end position="328"/>
    </location>
</feature>
<feature type="turn" evidence="6">
    <location>
        <begin position="329"/>
        <end position="331"/>
    </location>
</feature>
<feature type="strand" evidence="6">
    <location>
        <begin position="334"/>
        <end position="336"/>
    </location>
</feature>
<feature type="turn" evidence="6">
    <location>
        <begin position="339"/>
        <end position="344"/>
    </location>
</feature>
<feature type="strand" evidence="6">
    <location>
        <begin position="348"/>
        <end position="350"/>
    </location>
</feature>
<feature type="strand" evidence="6">
    <location>
        <begin position="352"/>
        <end position="359"/>
    </location>
</feature>
<feature type="strand" evidence="6">
    <location>
        <begin position="361"/>
        <end position="372"/>
    </location>
</feature>
<evidence type="ECO:0000250" key="1">
    <source>
        <dbReference type="UniProtKB" id="A0A0A7HF79"/>
    </source>
</evidence>
<evidence type="ECO:0000256" key="2">
    <source>
        <dbReference type="SAM" id="MobiDB-lite"/>
    </source>
</evidence>
<evidence type="ECO:0000269" key="3">
    <source>
    </source>
</evidence>
<evidence type="ECO:0000305" key="4"/>
<evidence type="ECO:0000305" key="5">
    <source>
    </source>
</evidence>
<evidence type="ECO:0007829" key="6">
    <source>
        <dbReference type="PDB" id="8X5D"/>
    </source>
</evidence>
<organism>
    <name type="scientific">Mycobacterium tuberculosis (strain ATCC 25618 / H37Rv)</name>
    <dbReference type="NCBI Taxonomy" id="83332"/>
    <lineage>
        <taxon>Bacteria</taxon>
        <taxon>Bacillati</taxon>
        <taxon>Actinomycetota</taxon>
        <taxon>Actinomycetes</taxon>
        <taxon>Mycobacteriales</taxon>
        <taxon>Mycobacteriaceae</taxon>
        <taxon>Mycobacterium</taxon>
        <taxon>Mycobacterium tuberculosis complex</taxon>
    </lineage>
</organism>
<protein>
    <recommendedName>
        <fullName>CRISPR system Cms protein Csm5</fullName>
    </recommendedName>
    <alternativeName>
        <fullName>CRISPR type III A-associated protein Csm5</fullName>
    </alternativeName>
</protein>